<gene>
    <name type="ordered locus">DICTH_0881</name>
</gene>
<accession>B5YDY6</accession>
<evidence type="ECO:0000255" key="1">
    <source>
        <dbReference type="HAMAP-Rule" id="MF_00651"/>
    </source>
</evidence>
<reference key="1">
    <citation type="journal article" date="2014" name="Genome Announc.">
        <title>Complete Genome Sequence of the Extreme Thermophile Dictyoglomus thermophilum H-6-12.</title>
        <authorList>
            <person name="Coil D.A."/>
            <person name="Badger J.H."/>
            <person name="Forberger H.C."/>
            <person name="Riggs F."/>
            <person name="Madupu R."/>
            <person name="Fedorova N."/>
            <person name="Ward N."/>
            <person name="Robb F.T."/>
            <person name="Eisen J.A."/>
        </authorList>
    </citation>
    <scope>NUCLEOTIDE SEQUENCE [LARGE SCALE GENOMIC DNA]</scope>
    <source>
        <strain>ATCC 35947 / DSM 3960 / H-6-12</strain>
    </source>
</reference>
<proteinExistence type="inferred from homology"/>
<comment type="function">
    <text evidence="1">Could be a nuclease involved in processing of the 5'-end of pre-16S rRNA.</text>
</comment>
<comment type="subcellular location">
    <subcellularLocation>
        <location evidence="1">Cytoplasm</location>
    </subcellularLocation>
</comment>
<comment type="similarity">
    <text evidence="1">Belongs to the YqgF nuclease family.</text>
</comment>
<dbReference type="EC" id="3.1.-.-" evidence="1"/>
<dbReference type="EMBL" id="CP001146">
    <property type="protein sequence ID" value="ACI18668.1"/>
    <property type="molecule type" value="Genomic_DNA"/>
</dbReference>
<dbReference type="RefSeq" id="WP_012547300.1">
    <property type="nucleotide sequence ID" value="NC_011297.1"/>
</dbReference>
<dbReference type="SMR" id="B5YDY6"/>
<dbReference type="STRING" id="309799.DICTH_0881"/>
<dbReference type="PaxDb" id="309799-DICTH_0881"/>
<dbReference type="KEGG" id="dth:DICTH_0881"/>
<dbReference type="eggNOG" id="COG0816">
    <property type="taxonomic scope" value="Bacteria"/>
</dbReference>
<dbReference type="HOGENOM" id="CLU_098240_2_0_0"/>
<dbReference type="OrthoDB" id="9790539at2"/>
<dbReference type="Proteomes" id="UP000001733">
    <property type="component" value="Chromosome"/>
</dbReference>
<dbReference type="GO" id="GO:0005829">
    <property type="term" value="C:cytosol"/>
    <property type="evidence" value="ECO:0007669"/>
    <property type="project" value="TreeGrafter"/>
</dbReference>
<dbReference type="GO" id="GO:0004518">
    <property type="term" value="F:nuclease activity"/>
    <property type="evidence" value="ECO:0007669"/>
    <property type="project" value="UniProtKB-KW"/>
</dbReference>
<dbReference type="GO" id="GO:0000967">
    <property type="term" value="P:rRNA 5'-end processing"/>
    <property type="evidence" value="ECO:0007669"/>
    <property type="project" value="UniProtKB-UniRule"/>
</dbReference>
<dbReference type="CDD" id="cd16964">
    <property type="entry name" value="YqgF"/>
    <property type="match status" value="1"/>
</dbReference>
<dbReference type="Gene3D" id="3.30.420.140">
    <property type="entry name" value="YqgF/RNase H-like domain"/>
    <property type="match status" value="1"/>
</dbReference>
<dbReference type="HAMAP" id="MF_00651">
    <property type="entry name" value="Nuclease_YqgF"/>
    <property type="match status" value="1"/>
</dbReference>
<dbReference type="InterPro" id="IPR012337">
    <property type="entry name" value="RNaseH-like_sf"/>
</dbReference>
<dbReference type="InterPro" id="IPR005227">
    <property type="entry name" value="YqgF"/>
</dbReference>
<dbReference type="InterPro" id="IPR006641">
    <property type="entry name" value="YqgF/RNaseH-like_dom"/>
</dbReference>
<dbReference type="InterPro" id="IPR037027">
    <property type="entry name" value="YqgF/RNaseH-like_dom_sf"/>
</dbReference>
<dbReference type="NCBIfam" id="TIGR00250">
    <property type="entry name" value="RNAse_H_YqgF"/>
    <property type="match status" value="1"/>
</dbReference>
<dbReference type="PANTHER" id="PTHR33317">
    <property type="entry name" value="POLYNUCLEOTIDYL TRANSFERASE, RIBONUCLEASE H-LIKE SUPERFAMILY PROTEIN"/>
    <property type="match status" value="1"/>
</dbReference>
<dbReference type="PANTHER" id="PTHR33317:SF4">
    <property type="entry name" value="POLYNUCLEOTIDYL TRANSFERASE, RIBONUCLEASE H-LIKE SUPERFAMILY PROTEIN"/>
    <property type="match status" value="1"/>
</dbReference>
<dbReference type="Pfam" id="PF03652">
    <property type="entry name" value="RuvX"/>
    <property type="match status" value="1"/>
</dbReference>
<dbReference type="SMART" id="SM00732">
    <property type="entry name" value="YqgFc"/>
    <property type="match status" value="1"/>
</dbReference>
<dbReference type="SUPFAM" id="SSF53098">
    <property type="entry name" value="Ribonuclease H-like"/>
    <property type="match status" value="1"/>
</dbReference>
<feature type="chain" id="PRO_1000131025" description="Putative pre-16S rRNA nuclease">
    <location>
        <begin position="1"/>
        <end position="139"/>
    </location>
</feature>
<keyword id="KW-0963">Cytoplasm</keyword>
<keyword id="KW-0378">Hydrolase</keyword>
<keyword id="KW-0540">Nuclease</keyword>
<keyword id="KW-0690">Ribosome biogenesis</keyword>
<name>YQGF_DICT6</name>
<organism>
    <name type="scientific">Dictyoglomus thermophilum (strain ATCC 35947 / DSM 3960 / H-6-12)</name>
    <dbReference type="NCBI Taxonomy" id="309799"/>
    <lineage>
        <taxon>Bacteria</taxon>
        <taxon>Pseudomonadati</taxon>
        <taxon>Dictyoglomota</taxon>
        <taxon>Dictyoglomia</taxon>
        <taxon>Dictyoglomales</taxon>
        <taxon>Dictyoglomaceae</taxon>
        <taxon>Dictyoglomus</taxon>
    </lineage>
</organism>
<protein>
    <recommendedName>
        <fullName evidence="1">Putative pre-16S rRNA nuclease</fullName>
        <ecNumber evidence="1">3.1.-.-</ecNumber>
    </recommendedName>
</protein>
<sequence>MRVLAIDWGEKYVGLAISDPLRIIAQGLDVWEIKGEEDFVSRLKRLVEDYQVKEIVLGYPISLRGHENERTQKVRHIAELIESVIGIPVKFVDERLTTMEAEKVLLEGDIKRKKRKLLKNKQAAVIILQKYLDSSSLDT</sequence>